<evidence type="ECO:0000250" key="1"/>
<evidence type="ECO:0000255" key="2"/>
<evidence type="ECO:0000305" key="3"/>
<comment type="function">
    <text evidence="1">Catalyzes the removal of sialic acid (N-acetylneuraminic acid) moieties from glycoproteins and glycolipids. To be active, it is strictly dependent on its presence in the multienzyme complex. Appears to have a preference for alpha 2-3 and alpha 2-6 sialyl linkage (By similarity).</text>
</comment>
<comment type="catalytic activity">
    <reaction>
        <text>Hydrolysis of alpha-(2-&gt;3)-, alpha-(2-&gt;6)-, alpha-(2-&gt;8)- glycosidic linkages of terminal sialic acid residues in oligosaccharides, glycoproteins, glycolipids, colominic acid and synthetic substrates.</text>
        <dbReference type="EC" id="3.2.1.18"/>
    </reaction>
</comment>
<comment type="subunit">
    <text evidence="1">Interacts with cathepsin A (protective protein), beta-galactosidase and N-acetylgalactosamine-6-sulfate sulfatase in a multienzyme complex.</text>
</comment>
<comment type="subcellular location">
    <subcellularLocation>
        <location evidence="1">Lysosome membrane</location>
        <topology evidence="1">Peripheral membrane protein</topology>
        <orientation evidence="1">Lumenal side</orientation>
    </subcellularLocation>
    <subcellularLocation>
        <location evidence="1">Lysosome lumen</location>
    </subcellularLocation>
    <subcellularLocation>
        <location evidence="1">Cell membrane</location>
    </subcellularLocation>
    <subcellularLocation>
        <location evidence="1">Cytoplasmic vesicle</location>
    </subcellularLocation>
    <text evidence="1">Localized not only on the inner side of the lysosomal membrane and in the lysosomal lumen, but also on the plasma membrane and in intracellular vesicles.</text>
</comment>
<comment type="domain">
    <text evidence="1">A C-terminal internalization signal (YGTL) appears to allow the targeting of plasma membrane proteins to endosomes.</text>
</comment>
<comment type="PTM">
    <text evidence="1">N-glycosylated.</text>
</comment>
<comment type="PTM">
    <text evidence="1">Phosphorylation of tyrosine within the internalization signal results in inhibition of sialidase internalization and blockage on the plasma membrane.</text>
</comment>
<comment type="similarity">
    <text evidence="3">Belongs to the glycosyl hydrolase 33 family.</text>
</comment>
<reference key="1">
    <citation type="submission" date="2007-06" db="EMBL/GenBank/DDBJ databases">
        <title>Evaluation of PPGB and NEU1 genes as candidates for the lysosomal storage disorder in Japanese black cattle.</title>
        <authorList>
            <person name="Masoudi A.A."/>
            <person name="Yamato O."/>
            <person name="Kunieda T."/>
        </authorList>
    </citation>
    <scope>NUCLEOTIDE SEQUENCE [GENOMIC DNA]</scope>
</reference>
<reference key="2">
    <citation type="submission" date="2007-03" db="EMBL/GenBank/DDBJ databases">
        <authorList>
            <consortium name="NIH - Mammalian Gene Collection (MGC) project"/>
        </authorList>
    </citation>
    <scope>NUCLEOTIDE SEQUENCE [LARGE SCALE MRNA]</scope>
    <source>
        <strain>Hereford</strain>
        <tissue>Basal ganglia</tissue>
    </source>
</reference>
<reference key="3">
    <citation type="submission" date="2005-02" db="EMBL/GenBank/DDBJ databases">
        <title>Estimating probability of parentage in U.S. beef and dairy cattle with single nucleotide polymorphisms.</title>
        <authorList>
            <person name="Heaton M.P."/>
            <person name="Clawson M.L."/>
            <person name="Snelling W.M."/>
            <person name="Keele J.W."/>
            <person name="Harhay G.P."/>
            <person name="Wiedmann R.T."/>
            <person name="Bennett G.L."/>
            <person name="Smith T.P.L."/>
            <person name="Stone R.T."/>
            <person name="Freking B.A."/>
            <person name="Van Tassell C.P."/>
            <person name="Sonstegard T.S."/>
            <person name="Gasbarre L.C."/>
            <person name="Carr J."/>
            <person name="DiBello P."/>
            <person name="Kumar M."/>
            <person name="Lee M.S."/>
            <person name="Murthy J."/>
            <person name="Otto J."/>
            <person name="Salisbury B."/>
            <person name="Schulz V."/>
            <person name="Tracy R."/>
            <person name="Hawk D.A."/>
            <person name="Kalbfleisch T."/>
            <person name="Laegreid W.W."/>
        </authorList>
    </citation>
    <scope>NUCLEOTIDE SEQUENCE [GENOMIC DNA] OF 54-205</scope>
</reference>
<dbReference type="EC" id="3.2.1.18"/>
<dbReference type="EMBL" id="AB327106">
    <property type="protein sequence ID" value="BAF64705.1"/>
    <property type="molecule type" value="Genomic_DNA"/>
</dbReference>
<dbReference type="EMBL" id="BC134571">
    <property type="protein sequence ID" value="AAI34572.1"/>
    <property type="molecule type" value="mRNA"/>
</dbReference>
<dbReference type="EMBL" id="AY937242">
    <property type="protein sequence ID" value="AAX14675.1"/>
    <property type="molecule type" value="Genomic_DNA"/>
</dbReference>
<dbReference type="RefSeq" id="NP_001077111.1">
    <property type="nucleotide sequence ID" value="NM_001083642.1"/>
</dbReference>
<dbReference type="SMR" id="A6BMK7"/>
<dbReference type="FunCoup" id="A6BMK7">
    <property type="interactions" value="243"/>
</dbReference>
<dbReference type="STRING" id="9913.ENSBTAP00000073421"/>
<dbReference type="CAZy" id="GH33">
    <property type="family name" value="Glycoside Hydrolase Family 33"/>
</dbReference>
<dbReference type="GlyCosmos" id="A6BMK7">
    <property type="glycosylation" value="3 sites, No reported glycans"/>
</dbReference>
<dbReference type="GlyGen" id="A6BMK7">
    <property type="glycosylation" value="3 sites"/>
</dbReference>
<dbReference type="PaxDb" id="9913-ENSBTAP00000007454"/>
<dbReference type="Ensembl" id="ENSBTAT00000007454.5">
    <property type="protein sequence ID" value="ENSBTAP00000007454.4"/>
    <property type="gene ID" value="ENSBTAG00000005674.6"/>
</dbReference>
<dbReference type="GeneID" id="505554"/>
<dbReference type="KEGG" id="bta:505554"/>
<dbReference type="CTD" id="4758"/>
<dbReference type="VEuPathDB" id="HostDB:ENSBTAG00000005674"/>
<dbReference type="VGNC" id="VGNC:50230">
    <property type="gene designation" value="NEU1"/>
</dbReference>
<dbReference type="eggNOG" id="ENOG502QSIT">
    <property type="taxonomic scope" value="Eukaryota"/>
</dbReference>
<dbReference type="GeneTree" id="ENSGT00950000182944"/>
<dbReference type="HOGENOM" id="CLU_024620_3_0_1"/>
<dbReference type="InParanoid" id="A6BMK7"/>
<dbReference type="OrthoDB" id="2739686at2759"/>
<dbReference type="TreeFam" id="TF331063"/>
<dbReference type="Reactome" id="R-BTA-4085001">
    <property type="pathway name" value="Sialic acid metabolism"/>
</dbReference>
<dbReference type="Reactome" id="R-BTA-6798695">
    <property type="pathway name" value="Neutrophil degranulation"/>
</dbReference>
<dbReference type="Reactome" id="R-BTA-9840310">
    <property type="pathway name" value="Glycosphingolipid catabolism"/>
</dbReference>
<dbReference type="Proteomes" id="UP000009136">
    <property type="component" value="Chromosome 23"/>
</dbReference>
<dbReference type="Bgee" id="ENSBTAG00000005674">
    <property type="expression patterns" value="Expressed in ileocecal valve and 105 other cell types or tissues"/>
</dbReference>
<dbReference type="GO" id="GO:0030054">
    <property type="term" value="C:cell junction"/>
    <property type="evidence" value="ECO:0007669"/>
    <property type="project" value="Ensembl"/>
</dbReference>
<dbReference type="GO" id="GO:0005737">
    <property type="term" value="C:cytoplasm"/>
    <property type="evidence" value="ECO:0000318"/>
    <property type="project" value="GO_Central"/>
</dbReference>
<dbReference type="GO" id="GO:0031410">
    <property type="term" value="C:cytoplasmic vesicle"/>
    <property type="evidence" value="ECO:0007669"/>
    <property type="project" value="UniProtKB-KW"/>
</dbReference>
<dbReference type="GO" id="GO:0043202">
    <property type="term" value="C:lysosomal lumen"/>
    <property type="evidence" value="ECO:0007669"/>
    <property type="project" value="UniProtKB-SubCell"/>
</dbReference>
<dbReference type="GO" id="GO:0005765">
    <property type="term" value="C:lysosomal membrane"/>
    <property type="evidence" value="ECO:0007669"/>
    <property type="project" value="UniProtKB-SubCell"/>
</dbReference>
<dbReference type="GO" id="GO:0005764">
    <property type="term" value="C:lysosome"/>
    <property type="evidence" value="ECO:0000250"/>
    <property type="project" value="UniProtKB"/>
</dbReference>
<dbReference type="GO" id="GO:0016020">
    <property type="term" value="C:membrane"/>
    <property type="evidence" value="ECO:0000318"/>
    <property type="project" value="GO_Central"/>
</dbReference>
<dbReference type="GO" id="GO:0005886">
    <property type="term" value="C:plasma membrane"/>
    <property type="evidence" value="ECO:0007669"/>
    <property type="project" value="UniProtKB-SubCell"/>
</dbReference>
<dbReference type="GO" id="GO:0004308">
    <property type="term" value="F:exo-alpha-sialidase activity"/>
    <property type="evidence" value="ECO:0000250"/>
    <property type="project" value="UniProtKB"/>
</dbReference>
<dbReference type="GO" id="GO:0006689">
    <property type="term" value="P:ganglioside catabolic process"/>
    <property type="evidence" value="ECO:0000318"/>
    <property type="project" value="GO_Central"/>
</dbReference>
<dbReference type="GO" id="GO:0009313">
    <property type="term" value="P:oligosaccharide catabolic process"/>
    <property type="evidence" value="ECO:0000250"/>
    <property type="project" value="UniProtKB"/>
</dbReference>
<dbReference type="CDD" id="cd15482">
    <property type="entry name" value="Sialidase_non-viral"/>
    <property type="match status" value="1"/>
</dbReference>
<dbReference type="FunFam" id="2.120.10.10:FF:000003">
    <property type="entry name" value="Neuraminidase 1"/>
    <property type="match status" value="1"/>
</dbReference>
<dbReference type="Gene3D" id="2.120.10.10">
    <property type="match status" value="1"/>
</dbReference>
<dbReference type="InterPro" id="IPR011040">
    <property type="entry name" value="Sialidase"/>
</dbReference>
<dbReference type="InterPro" id="IPR026856">
    <property type="entry name" value="Sialidase_fam"/>
</dbReference>
<dbReference type="InterPro" id="IPR036278">
    <property type="entry name" value="Sialidase_sf"/>
</dbReference>
<dbReference type="PANTHER" id="PTHR10628">
    <property type="entry name" value="SIALIDASE"/>
    <property type="match status" value="1"/>
</dbReference>
<dbReference type="PANTHER" id="PTHR10628:SF25">
    <property type="entry name" value="SIALIDASE-1"/>
    <property type="match status" value="1"/>
</dbReference>
<dbReference type="Pfam" id="PF13088">
    <property type="entry name" value="BNR_2"/>
    <property type="match status" value="1"/>
</dbReference>
<dbReference type="SUPFAM" id="SSF50939">
    <property type="entry name" value="Sialidases"/>
    <property type="match status" value="1"/>
</dbReference>
<accession>A6BMK7</accession>
<accession>A4IFG6</accession>
<accession>Q5D0G1</accession>
<feature type="signal peptide" evidence="1">
    <location>
        <begin position="1"/>
        <end position="47"/>
    </location>
</feature>
<feature type="chain" id="PRO_0000304726" description="Sialidase-1">
    <location>
        <begin position="48"/>
        <end position="415"/>
    </location>
</feature>
<feature type="repeat" description="BNR 1">
    <location>
        <begin position="112"/>
        <end position="123"/>
    </location>
</feature>
<feature type="repeat" description="BNR 2">
    <location>
        <begin position="172"/>
        <end position="183"/>
    </location>
</feature>
<feature type="repeat" description="BNR 3">
    <location>
        <begin position="231"/>
        <end position="242"/>
    </location>
</feature>
<feature type="repeat" description="BNR 4">
    <location>
        <begin position="347"/>
        <end position="358"/>
    </location>
</feature>
<feature type="short sequence motif" description="FRIP motif">
    <location>
        <begin position="77"/>
        <end position="80"/>
    </location>
</feature>
<feature type="short sequence motif" description="Internalization signal">
    <location>
        <begin position="412"/>
        <end position="415"/>
    </location>
</feature>
<feature type="active site" description="Proton acceptor" evidence="1">
    <location>
        <position position="103"/>
    </location>
</feature>
<feature type="active site" description="Nucleophile" evidence="1">
    <location>
        <position position="370"/>
    </location>
</feature>
<feature type="active site" evidence="2">
    <location>
        <position position="394"/>
    </location>
</feature>
<feature type="binding site" evidence="1">
    <location>
        <position position="78"/>
    </location>
    <ligand>
        <name>substrate</name>
    </ligand>
</feature>
<feature type="binding site" evidence="1">
    <location>
        <position position="97"/>
    </location>
    <ligand>
        <name>substrate</name>
    </ligand>
</feature>
<feature type="binding site" evidence="1">
    <location>
        <position position="264"/>
    </location>
    <ligand>
        <name>substrate</name>
    </ligand>
</feature>
<feature type="binding site" evidence="1">
    <location>
        <position position="280"/>
    </location>
    <ligand>
        <name>substrate</name>
    </ligand>
</feature>
<feature type="binding site" evidence="1">
    <location>
        <position position="341"/>
    </location>
    <ligand>
        <name>substrate</name>
    </ligand>
</feature>
<feature type="glycosylation site" description="N-linked (GlcNAc...) asparagine" evidence="2">
    <location>
        <position position="186"/>
    </location>
</feature>
<feature type="glycosylation site" description="N-linked (GlcNAc...) asparagine" evidence="2">
    <location>
        <position position="343"/>
    </location>
</feature>
<feature type="glycosylation site" description="N-linked (GlcNAc...) asparagine" evidence="2">
    <location>
        <position position="352"/>
    </location>
</feature>
<feature type="sequence conflict" description="In Ref. 1; BAF64705." evidence="3" ref="1">
    <original>S</original>
    <variation>G</variation>
    <location>
        <position position="410"/>
    </location>
</feature>
<organism>
    <name type="scientific">Bos taurus</name>
    <name type="common">Bovine</name>
    <dbReference type="NCBI Taxonomy" id="9913"/>
    <lineage>
        <taxon>Eukaryota</taxon>
        <taxon>Metazoa</taxon>
        <taxon>Chordata</taxon>
        <taxon>Craniata</taxon>
        <taxon>Vertebrata</taxon>
        <taxon>Euteleostomi</taxon>
        <taxon>Mammalia</taxon>
        <taxon>Eutheria</taxon>
        <taxon>Laurasiatheria</taxon>
        <taxon>Artiodactyla</taxon>
        <taxon>Ruminantia</taxon>
        <taxon>Pecora</taxon>
        <taxon>Bovidae</taxon>
        <taxon>Bovinae</taxon>
        <taxon>Bos</taxon>
    </lineage>
</organism>
<name>NEUR1_BOVIN</name>
<keyword id="KW-0119">Carbohydrate metabolism</keyword>
<keyword id="KW-1003">Cell membrane</keyword>
<keyword id="KW-0968">Cytoplasmic vesicle</keyword>
<keyword id="KW-0325">Glycoprotein</keyword>
<keyword id="KW-0326">Glycosidase</keyword>
<keyword id="KW-0378">Hydrolase</keyword>
<keyword id="KW-0442">Lipid degradation</keyword>
<keyword id="KW-0443">Lipid metabolism</keyword>
<keyword id="KW-0458">Lysosome</keyword>
<keyword id="KW-0472">Membrane</keyword>
<keyword id="KW-0597">Phosphoprotein</keyword>
<keyword id="KW-1185">Reference proteome</keyword>
<keyword id="KW-0677">Repeat</keyword>
<keyword id="KW-0732">Signal</keyword>
<protein>
    <recommendedName>
        <fullName>Sialidase-1</fullName>
        <ecNumber>3.2.1.18</ecNumber>
    </recommendedName>
    <alternativeName>
        <fullName>Acetylneuraminyl hydrolase</fullName>
    </alternativeName>
    <alternativeName>
        <fullName>Lysosomal sialidase</fullName>
    </alternativeName>
    <alternativeName>
        <fullName>N-acetyl-alpha-neuraminidase 1</fullName>
    </alternativeName>
</protein>
<proteinExistence type="evidence at transcript level"/>
<gene>
    <name type="primary">NEU1</name>
</gene>
<sequence length="415" mass="45433">MTEEGPGIVSLGKLRRPRMLRLWGICRVQIFSAIFMLMSPAGVGAGAKDDFSLVHPLVTMEQLLWVSGKQIGSVDTFRIPLITTTPRGTLLAFAEARKMSTSDKGAKFIALRRSMDQGSTWSPTAFIVDDGETPDGLNLGAVVSDTTTGVVFLFYSLCAHKAGCQVASTMLVWSKDDGVSWSSPRNLSLDIGTEMFAPGPGSGIQKQREPRKGRLIVCGHGTLERDGVFCLLSDDHGVSWRYGGGVSGIPYGQPKRENDFNPDECQPYELPDGSVVINARNQNNYHCHCRIILRSYDACDTLRPRDVTFDTELVDPVVAAGAVATSSGIVFFSNPAHPEFRVNLTLRWSFSNGTSWRKETVQLWPGPSGYSSLTTLEGNVDGKDEAPQLYVLYEKGRNQYMESISLVKVSVYGTL</sequence>